<protein>
    <recommendedName>
        <fullName evidence="2">GTP cyclohydrolase 1</fullName>
        <ecNumber evidence="2">3.5.4.16</ecNumber>
    </recommendedName>
    <alternativeName>
        <fullName evidence="2">GTP cyclohydrolase I</fullName>
        <shortName evidence="2">GTP-CH-I</shortName>
    </alternativeName>
</protein>
<comment type="catalytic activity">
    <reaction evidence="2">
        <text>GTP + H2O = 7,8-dihydroneopterin 3'-triphosphate + formate + H(+)</text>
        <dbReference type="Rhea" id="RHEA:17473"/>
        <dbReference type="ChEBI" id="CHEBI:15377"/>
        <dbReference type="ChEBI" id="CHEBI:15378"/>
        <dbReference type="ChEBI" id="CHEBI:15740"/>
        <dbReference type="ChEBI" id="CHEBI:37565"/>
        <dbReference type="ChEBI" id="CHEBI:58462"/>
        <dbReference type="EC" id="3.5.4.16"/>
    </reaction>
</comment>
<comment type="pathway">
    <text evidence="2">Cofactor biosynthesis; 7,8-dihydroneopterin triphosphate biosynthesis; 7,8-dihydroneopterin triphosphate from GTP: step 1/1.</text>
</comment>
<comment type="subunit">
    <text evidence="1">Toroid-shaped homodecamer, composed of two pentamers of five dimers.</text>
</comment>
<comment type="similarity">
    <text evidence="2">Belongs to the GTP cyclohydrolase I family.</text>
</comment>
<evidence type="ECO:0000250" key="1"/>
<evidence type="ECO:0000255" key="2">
    <source>
        <dbReference type="HAMAP-Rule" id="MF_00223"/>
    </source>
</evidence>
<sequence>MALSEAAKQVQTALLERGLETPMVPCGLSSEARKEKIEHHMREILTLMSLDLRDDSLVETPKRIAKMYVDEIFSGLDYENFPKITVIENKMGFDEMVKVNDISLTSTCEHHLVTIDGVATVAYLPRKNIIGLSKINRIVRFFAQRPQVQERLTQQVLVALQTLLETKDVAVKMDAVHYCVKSRGVMDSTSTTTTTALGGIFKSNPATRAEFLSN</sequence>
<feature type="chain" id="PRO_1000043732" description="GTP cyclohydrolase 1">
    <location>
        <begin position="1"/>
        <end position="214"/>
    </location>
</feature>
<feature type="binding site" evidence="2">
    <location>
        <position position="108"/>
    </location>
    <ligand>
        <name>Zn(2+)</name>
        <dbReference type="ChEBI" id="CHEBI:29105"/>
    </ligand>
</feature>
<feature type="binding site" evidence="2">
    <location>
        <position position="111"/>
    </location>
    <ligand>
        <name>Zn(2+)</name>
        <dbReference type="ChEBI" id="CHEBI:29105"/>
    </ligand>
</feature>
<feature type="binding site" evidence="2">
    <location>
        <position position="179"/>
    </location>
    <ligand>
        <name>Zn(2+)</name>
        <dbReference type="ChEBI" id="CHEBI:29105"/>
    </ligand>
</feature>
<gene>
    <name evidence="2" type="primary">folE</name>
    <name type="ordered locus">Shew_3486</name>
</gene>
<dbReference type="EC" id="3.5.4.16" evidence="2"/>
<dbReference type="EMBL" id="CP000606">
    <property type="protein sequence ID" value="ABO25352.1"/>
    <property type="molecule type" value="Genomic_DNA"/>
</dbReference>
<dbReference type="RefSeq" id="WP_011867281.1">
    <property type="nucleotide sequence ID" value="NC_009092.1"/>
</dbReference>
<dbReference type="SMR" id="A3QIQ4"/>
<dbReference type="STRING" id="323850.Shew_3486"/>
<dbReference type="KEGG" id="slo:Shew_3486"/>
<dbReference type="eggNOG" id="COG0302">
    <property type="taxonomic scope" value="Bacteria"/>
</dbReference>
<dbReference type="HOGENOM" id="CLU_049768_3_2_6"/>
<dbReference type="OrthoDB" id="9801207at2"/>
<dbReference type="UniPathway" id="UPA00848">
    <property type="reaction ID" value="UER00151"/>
</dbReference>
<dbReference type="Proteomes" id="UP000001558">
    <property type="component" value="Chromosome"/>
</dbReference>
<dbReference type="GO" id="GO:0005737">
    <property type="term" value="C:cytoplasm"/>
    <property type="evidence" value="ECO:0007669"/>
    <property type="project" value="TreeGrafter"/>
</dbReference>
<dbReference type="GO" id="GO:0005525">
    <property type="term" value="F:GTP binding"/>
    <property type="evidence" value="ECO:0007669"/>
    <property type="project" value="UniProtKB-KW"/>
</dbReference>
<dbReference type="GO" id="GO:0003934">
    <property type="term" value="F:GTP cyclohydrolase I activity"/>
    <property type="evidence" value="ECO:0007669"/>
    <property type="project" value="UniProtKB-UniRule"/>
</dbReference>
<dbReference type="GO" id="GO:0008270">
    <property type="term" value="F:zinc ion binding"/>
    <property type="evidence" value="ECO:0007669"/>
    <property type="project" value="UniProtKB-UniRule"/>
</dbReference>
<dbReference type="GO" id="GO:0006730">
    <property type="term" value="P:one-carbon metabolic process"/>
    <property type="evidence" value="ECO:0007669"/>
    <property type="project" value="UniProtKB-UniRule"/>
</dbReference>
<dbReference type="GO" id="GO:0006729">
    <property type="term" value="P:tetrahydrobiopterin biosynthetic process"/>
    <property type="evidence" value="ECO:0007669"/>
    <property type="project" value="TreeGrafter"/>
</dbReference>
<dbReference type="GO" id="GO:0046654">
    <property type="term" value="P:tetrahydrofolate biosynthetic process"/>
    <property type="evidence" value="ECO:0007669"/>
    <property type="project" value="UniProtKB-UniRule"/>
</dbReference>
<dbReference type="FunFam" id="3.30.1130.10:FF:000001">
    <property type="entry name" value="GTP cyclohydrolase 1"/>
    <property type="match status" value="1"/>
</dbReference>
<dbReference type="Gene3D" id="1.10.286.10">
    <property type="match status" value="1"/>
</dbReference>
<dbReference type="Gene3D" id="3.30.1130.10">
    <property type="match status" value="1"/>
</dbReference>
<dbReference type="HAMAP" id="MF_00223">
    <property type="entry name" value="FolE"/>
    <property type="match status" value="1"/>
</dbReference>
<dbReference type="InterPro" id="IPR043133">
    <property type="entry name" value="GTP-CH-I_C/QueF"/>
</dbReference>
<dbReference type="InterPro" id="IPR043134">
    <property type="entry name" value="GTP-CH-I_N"/>
</dbReference>
<dbReference type="InterPro" id="IPR001474">
    <property type="entry name" value="GTP_CycHdrlase_I"/>
</dbReference>
<dbReference type="InterPro" id="IPR018234">
    <property type="entry name" value="GTP_CycHdrlase_I_CS"/>
</dbReference>
<dbReference type="InterPro" id="IPR020602">
    <property type="entry name" value="GTP_CycHdrlase_I_dom"/>
</dbReference>
<dbReference type="NCBIfam" id="TIGR00063">
    <property type="entry name" value="folE"/>
    <property type="match status" value="1"/>
</dbReference>
<dbReference type="NCBIfam" id="NF006824">
    <property type="entry name" value="PRK09347.1-1"/>
    <property type="match status" value="1"/>
</dbReference>
<dbReference type="NCBIfam" id="NF006826">
    <property type="entry name" value="PRK09347.1-3"/>
    <property type="match status" value="1"/>
</dbReference>
<dbReference type="PANTHER" id="PTHR11109:SF7">
    <property type="entry name" value="GTP CYCLOHYDROLASE 1"/>
    <property type="match status" value="1"/>
</dbReference>
<dbReference type="PANTHER" id="PTHR11109">
    <property type="entry name" value="GTP CYCLOHYDROLASE I"/>
    <property type="match status" value="1"/>
</dbReference>
<dbReference type="Pfam" id="PF01227">
    <property type="entry name" value="GTP_cyclohydroI"/>
    <property type="match status" value="1"/>
</dbReference>
<dbReference type="SUPFAM" id="SSF55620">
    <property type="entry name" value="Tetrahydrobiopterin biosynthesis enzymes-like"/>
    <property type="match status" value="1"/>
</dbReference>
<dbReference type="PROSITE" id="PS00859">
    <property type="entry name" value="GTP_CYCLOHYDROL_1_1"/>
    <property type="match status" value="1"/>
</dbReference>
<dbReference type="PROSITE" id="PS00860">
    <property type="entry name" value="GTP_CYCLOHYDROL_1_2"/>
    <property type="match status" value="1"/>
</dbReference>
<organism>
    <name type="scientific">Shewanella loihica (strain ATCC BAA-1088 / PV-4)</name>
    <dbReference type="NCBI Taxonomy" id="323850"/>
    <lineage>
        <taxon>Bacteria</taxon>
        <taxon>Pseudomonadati</taxon>
        <taxon>Pseudomonadota</taxon>
        <taxon>Gammaproteobacteria</taxon>
        <taxon>Alteromonadales</taxon>
        <taxon>Shewanellaceae</taxon>
        <taxon>Shewanella</taxon>
    </lineage>
</organism>
<reference key="1">
    <citation type="submission" date="2007-03" db="EMBL/GenBank/DDBJ databases">
        <title>Complete sequence of Shewanella loihica PV-4.</title>
        <authorList>
            <consortium name="US DOE Joint Genome Institute"/>
            <person name="Copeland A."/>
            <person name="Lucas S."/>
            <person name="Lapidus A."/>
            <person name="Barry K."/>
            <person name="Detter J.C."/>
            <person name="Glavina del Rio T."/>
            <person name="Hammon N."/>
            <person name="Israni S."/>
            <person name="Dalin E."/>
            <person name="Tice H."/>
            <person name="Pitluck S."/>
            <person name="Chain P."/>
            <person name="Malfatti S."/>
            <person name="Shin M."/>
            <person name="Vergez L."/>
            <person name="Schmutz J."/>
            <person name="Larimer F."/>
            <person name="Land M."/>
            <person name="Hauser L."/>
            <person name="Kyrpides N."/>
            <person name="Mikhailova N."/>
            <person name="Romine M.F."/>
            <person name="Serres G."/>
            <person name="Fredrickson J."/>
            <person name="Tiedje J."/>
            <person name="Richardson P."/>
        </authorList>
    </citation>
    <scope>NUCLEOTIDE SEQUENCE [LARGE SCALE GENOMIC DNA]</scope>
    <source>
        <strain>ATCC BAA-1088 / PV-4</strain>
    </source>
</reference>
<accession>A3QIQ4</accession>
<name>GCH1_SHELP</name>
<keyword id="KW-0342">GTP-binding</keyword>
<keyword id="KW-0378">Hydrolase</keyword>
<keyword id="KW-0479">Metal-binding</keyword>
<keyword id="KW-0547">Nucleotide-binding</keyword>
<keyword id="KW-0554">One-carbon metabolism</keyword>
<keyword id="KW-1185">Reference proteome</keyword>
<keyword id="KW-0862">Zinc</keyword>
<proteinExistence type="inferred from homology"/>